<feature type="transit peptide" description="Mitochondrion" evidence="1">
    <location>
        <begin position="1"/>
        <end position="9"/>
    </location>
</feature>
<feature type="chain" id="PRO_0000270488" description="Large ribosomal subunit protein uL24m">
    <location>
        <begin position="10"/>
        <end position="216"/>
    </location>
</feature>
<feature type="domain" description="KOW">
    <location>
        <begin position="56"/>
        <end position="89"/>
    </location>
</feature>
<feature type="modified residue" description="Phosphoserine" evidence="14">
    <location>
        <position position="24"/>
    </location>
</feature>
<feature type="sequence conflict" description="In Ref. 1; BAB14929 and 3; BAD96220." evidence="7" ref="1 3">
    <original>I</original>
    <variation>V</variation>
    <location>
        <position position="109"/>
    </location>
</feature>
<feature type="sequence conflict" description="In Ref. 1; BAB14929." evidence="7" ref="1">
    <original>Q</original>
    <variation>H</variation>
    <location>
        <position position="119"/>
    </location>
</feature>
<feature type="sequence conflict" description="In Ref. 1; BAB14929." evidence="7" ref="1">
    <original>E</original>
    <variation>D</variation>
    <location>
        <position position="134"/>
    </location>
</feature>
<feature type="sequence conflict" description="In Ref. 1; BAB14929." evidence="7" ref="1">
    <original>E</original>
    <variation>Q</variation>
    <location>
        <position position="142"/>
    </location>
</feature>
<feature type="sequence conflict" description="In Ref. 3; BAD96786." evidence="7" ref="3">
    <original>R</original>
    <variation>Q</variation>
    <location>
        <position position="208"/>
    </location>
</feature>
<feature type="helix" evidence="20">
    <location>
        <begin position="29"/>
        <end position="34"/>
    </location>
</feature>
<feature type="helix" evidence="20">
    <location>
        <begin position="51"/>
        <end position="53"/>
    </location>
</feature>
<feature type="strand" evidence="20">
    <location>
        <begin position="61"/>
        <end position="64"/>
    </location>
</feature>
<feature type="turn" evidence="20">
    <location>
        <begin position="68"/>
        <end position="71"/>
    </location>
</feature>
<feature type="strand" evidence="20">
    <location>
        <begin position="73"/>
        <end position="80"/>
    </location>
</feature>
<feature type="helix" evidence="20">
    <location>
        <begin position="81"/>
        <end position="83"/>
    </location>
</feature>
<feature type="strand" evidence="20">
    <location>
        <begin position="85"/>
        <end position="89"/>
    </location>
</feature>
<feature type="strand" evidence="20">
    <location>
        <begin position="91"/>
        <end position="99"/>
    </location>
</feature>
<feature type="strand" evidence="16">
    <location>
        <begin position="102"/>
        <end position="104"/>
    </location>
</feature>
<feature type="strand" evidence="20">
    <location>
        <begin position="107"/>
        <end position="112"/>
    </location>
</feature>
<feature type="strand" evidence="18">
    <location>
        <begin position="115"/>
        <end position="117"/>
    </location>
</feature>
<feature type="strand" evidence="20">
    <location>
        <begin position="119"/>
        <end position="123"/>
    </location>
</feature>
<feature type="turn" evidence="20">
    <location>
        <begin position="125"/>
        <end position="127"/>
    </location>
</feature>
<feature type="strand" evidence="19">
    <location>
        <begin position="129"/>
        <end position="131"/>
    </location>
</feature>
<feature type="strand" evidence="20">
    <location>
        <begin position="133"/>
        <end position="136"/>
    </location>
</feature>
<feature type="strand" evidence="20">
    <location>
        <begin position="139"/>
        <end position="142"/>
    </location>
</feature>
<feature type="strand" evidence="20">
    <location>
        <begin position="144"/>
        <end position="150"/>
    </location>
</feature>
<feature type="strand" evidence="15">
    <location>
        <begin position="152"/>
        <end position="154"/>
    </location>
</feature>
<feature type="helix" evidence="17">
    <location>
        <begin position="179"/>
        <end position="183"/>
    </location>
</feature>
<feature type="helix" evidence="17">
    <location>
        <begin position="194"/>
        <end position="202"/>
    </location>
</feature>
<feature type="strand" evidence="17">
    <location>
        <begin position="214"/>
        <end position="216"/>
    </location>
</feature>
<proteinExistence type="evidence at protein level"/>
<accession>Q96A35</accession>
<accession>D3DVC8</accession>
<accession>Q53G65</accession>
<accession>Q53HT0</accession>
<accession>Q5SYZ9</accession>
<accession>Q5SZ00</accession>
<accession>Q5SZ02</accession>
<accession>Q96Q70</accession>
<accession>Q9H7G3</accession>
<gene>
    <name type="primary">MRPL24</name>
</gene>
<name>RM24_HUMAN</name>
<organism>
    <name type="scientific">Homo sapiens</name>
    <name type="common">Human</name>
    <dbReference type="NCBI Taxonomy" id="9606"/>
    <lineage>
        <taxon>Eukaryota</taxon>
        <taxon>Metazoa</taxon>
        <taxon>Chordata</taxon>
        <taxon>Craniata</taxon>
        <taxon>Vertebrata</taxon>
        <taxon>Euteleostomi</taxon>
        <taxon>Mammalia</taxon>
        <taxon>Eutheria</taxon>
        <taxon>Euarchontoglires</taxon>
        <taxon>Primates</taxon>
        <taxon>Haplorrhini</taxon>
        <taxon>Catarrhini</taxon>
        <taxon>Hominidae</taxon>
        <taxon>Homo</taxon>
    </lineage>
</organism>
<dbReference type="EMBL" id="AK024570">
    <property type="protein sequence ID" value="BAB14929.1"/>
    <property type="molecule type" value="mRNA"/>
</dbReference>
<dbReference type="EMBL" id="CR457329">
    <property type="protein sequence ID" value="CAG33610.1"/>
    <property type="molecule type" value="mRNA"/>
</dbReference>
<dbReference type="EMBL" id="AK222500">
    <property type="protein sequence ID" value="BAD96220.1"/>
    <property type="molecule type" value="mRNA"/>
</dbReference>
<dbReference type="EMBL" id="AK223066">
    <property type="protein sequence ID" value="BAD96786.1"/>
    <property type="molecule type" value="mRNA"/>
</dbReference>
<dbReference type="EMBL" id="AL590666">
    <property type="status" value="NOT_ANNOTATED_CDS"/>
    <property type="molecule type" value="Genomic_DNA"/>
</dbReference>
<dbReference type="EMBL" id="CH471121">
    <property type="protein sequence ID" value="EAW52913.1"/>
    <property type="molecule type" value="Genomic_DNA"/>
</dbReference>
<dbReference type="EMBL" id="CH471121">
    <property type="protein sequence ID" value="EAW52914.1"/>
    <property type="molecule type" value="Genomic_DNA"/>
</dbReference>
<dbReference type="EMBL" id="BC012440">
    <property type="protein sequence ID" value="AAH12440.1"/>
    <property type="molecule type" value="mRNA"/>
</dbReference>
<dbReference type="EMBL" id="BC016700">
    <property type="protein sequence ID" value="AAH16700.1"/>
    <property type="molecule type" value="mRNA"/>
</dbReference>
<dbReference type="EMBL" id="AB051341">
    <property type="protein sequence ID" value="BAB54931.2"/>
    <property type="molecule type" value="Genomic_DNA"/>
</dbReference>
<dbReference type="CCDS" id="CCDS1155.1"/>
<dbReference type="RefSeq" id="NP_078816.2">
    <property type="nucleotide sequence ID" value="NM_024540.3"/>
</dbReference>
<dbReference type="RefSeq" id="NP_663781.1">
    <property type="nucleotide sequence ID" value="NM_145729.3"/>
</dbReference>
<dbReference type="RefSeq" id="XP_011508283.1">
    <property type="nucleotide sequence ID" value="XM_011509981.3"/>
</dbReference>
<dbReference type="RefSeq" id="XP_011508284.1">
    <property type="nucleotide sequence ID" value="XM_011509982.3"/>
</dbReference>
<dbReference type="RefSeq" id="XP_054194707.1">
    <property type="nucleotide sequence ID" value="XM_054338732.1"/>
</dbReference>
<dbReference type="RefSeq" id="XP_054194708.1">
    <property type="nucleotide sequence ID" value="XM_054338733.1"/>
</dbReference>
<dbReference type="PDB" id="3J7Y">
    <property type="method" value="EM"/>
    <property type="resolution" value="3.40 A"/>
    <property type="chains" value="V=1-216"/>
</dbReference>
<dbReference type="PDB" id="3J9M">
    <property type="method" value="EM"/>
    <property type="resolution" value="3.50 A"/>
    <property type="chains" value="V=1-216"/>
</dbReference>
<dbReference type="PDB" id="5OOL">
    <property type="method" value="EM"/>
    <property type="resolution" value="3.06 A"/>
    <property type="chains" value="V=1-216"/>
</dbReference>
<dbReference type="PDB" id="5OOM">
    <property type="method" value="EM"/>
    <property type="resolution" value="3.03 A"/>
    <property type="chains" value="V=1-216"/>
</dbReference>
<dbReference type="PDB" id="6I9R">
    <property type="method" value="EM"/>
    <property type="resolution" value="3.90 A"/>
    <property type="chains" value="V=1-216"/>
</dbReference>
<dbReference type="PDB" id="6NU2">
    <property type="method" value="EM"/>
    <property type="resolution" value="3.90 A"/>
    <property type="chains" value="V=15-216"/>
</dbReference>
<dbReference type="PDB" id="6NU3">
    <property type="method" value="EM"/>
    <property type="resolution" value="4.40 A"/>
    <property type="chains" value="V=1-216"/>
</dbReference>
<dbReference type="PDB" id="6VLZ">
    <property type="method" value="EM"/>
    <property type="resolution" value="2.97 A"/>
    <property type="chains" value="V=1-216"/>
</dbReference>
<dbReference type="PDB" id="6VMI">
    <property type="method" value="EM"/>
    <property type="resolution" value="2.96 A"/>
    <property type="chains" value="V=1-216"/>
</dbReference>
<dbReference type="PDB" id="6ZM5">
    <property type="method" value="EM"/>
    <property type="resolution" value="2.89 A"/>
    <property type="chains" value="V=1-216"/>
</dbReference>
<dbReference type="PDB" id="6ZM6">
    <property type="method" value="EM"/>
    <property type="resolution" value="2.59 A"/>
    <property type="chains" value="V=1-216"/>
</dbReference>
<dbReference type="PDB" id="6ZS9">
    <property type="method" value="EM"/>
    <property type="resolution" value="4.00 A"/>
    <property type="chains" value="XV=1-216"/>
</dbReference>
<dbReference type="PDB" id="6ZSA">
    <property type="method" value="EM"/>
    <property type="resolution" value="4.00 A"/>
    <property type="chains" value="XV=1-216"/>
</dbReference>
<dbReference type="PDB" id="6ZSB">
    <property type="method" value="EM"/>
    <property type="resolution" value="4.50 A"/>
    <property type="chains" value="XV=1-216"/>
</dbReference>
<dbReference type="PDB" id="6ZSC">
    <property type="method" value="EM"/>
    <property type="resolution" value="3.50 A"/>
    <property type="chains" value="XV=1-216"/>
</dbReference>
<dbReference type="PDB" id="6ZSD">
    <property type="method" value="EM"/>
    <property type="resolution" value="3.70 A"/>
    <property type="chains" value="XV=1-216"/>
</dbReference>
<dbReference type="PDB" id="6ZSE">
    <property type="method" value="EM"/>
    <property type="resolution" value="5.00 A"/>
    <property type="chains" value="XV=1-216"/>
</dbReference>
<dbReference type="PDB" id="6ZSG">
    <property type="method" value="EM"/>
    <property type="resolution" value="4.00 A"/>
    <property type="chains" value="XV=1-216"/>
</dbReference>
<dbReference type="PDB" id="7A5F">
    <property type="method" value="EM"/>
    <property type="resolution" value="4.40 A"/>
    <property type="chains" value="V3=1-216"/>
</dbReference>
<dbReference type="PDB" id="7A5G">
    <property type="method" value="EM"/>
    <property type="resolution" value="4.33 A"/>
    <property type="chains" value="V3=1-216"/>
</dbReference>
<dbReference type="PDB" id="7A5H">
    <property type="method" value="EM"/>
    <property type="resolution" value="3.30 A"/>
    <property type="chains" value="V=1-216"/>
</dbReference>
<dbReference type="PDB" id="7A5I">
    <property type="method" value="EM"/>
    <property type="resolution" value="3.70 A"/>
    <property type="chains" value="V3=1-216"/>
</dbReference>
<dbReference type="PDB" id="7A5J">
    <property type="method" value="EM"/>
    <property type="resolution" value="3.10 A"/>
    <property type="chains" value="V=1-216"/>
</dbReference>
<dbReference type="PDB" id="7A5K">
    <property type="method" value="EM"/>
    <property type="resolution" value="3.70 A"/>
    <property type="chains" value="V3=1-216"/>
</dbReference>
<dbReference type="PDB" id="7L08">
    <property type="method" value="EM"/>
    <property type="resolution" value="3.49 A"/>
    <property type="chains" value="V=1-216"/>
</dbReference>
<dbReference type="PDB" id="7L20">
    <property type="method" value="EM"/>
    <property type="resolution" value="3.15 A"/>
    <property type="chains" value="V=1-216"/>
</dbReference>
<dbReference type="PDB" id="7O9K">
    <property type="method" value="EM"/>
    <property type="resolution" value="3.10 A"/>
    <property type="chains" value="V=1-216"/>
</dbReference>
<dbReference type="PDB" id="7O9M">
    <property type="method" value="EM"/>
    <property type="resolution" value="2.50 A"/>
    <property type="chains" value="V=1-216"/>
</dbReference>
<dbReference type="PDB" id="7ODR">
    <property type="method" value="EM"/>
    <property type="resolution" value="2.90 A"/>
    <property type="chains" value="V=1-216"/>
</dbReference>
<dbReference type="PDB" id="7ODS">
    <property type="method" value="EM"/>
    <property type="resolution" value="3.10 A"/>
    <property type="chains" value="V=1-216"/>
</dbReference>
<dbReference type="PDB" id="7ODT">
    <property type="method" value="EM"/>
    <property type="resolution" value="3.10 A"/>
    <property type="chains" value="V=1-216"/>
</dbReference>
<dbReference type="PDB" id="7OF0">
    <property type="method" value="EM"/>
    <property type="resolution" value="2.20 A"/>
    <property type="chains" value="V=1-216"/>
</dbReference>
<dbReference type="PDB" id="7OF2">
    <property type="method" value="EM"/>
    <property type="resolution" value="2.70 A"/>
    <property type="chains" value="V=1-216"/>
</dbReference>
<dbReference type="PDB" id="7OF3">
    <property type="method" value="EM"/>
    <property type="resolution" value="2.70 A"/>
    <property type="chains" value="V=1-216"/>
</dbReference>
<dbReference type="PDB" id="7OF4">
    <property type="method" value="EM"/>
    <property type="resolution" value="2.70 A"/>
    <property type="chains" value="V=1-216"/>
</dbReference>
<dbReference type="PDB" id="7OF5">
    <property type="method" value="EM"/>
    <property type="resolution" value="2.90 A"/>
    <property type="chains" value="V=1-216"/>
</dbReference>
<dbReference type="PDB" id="7OF6">
    <property type="method" value="EM"/>
    <property type="resolution" value="2.60 A"/>
    <property type="chains" value="V=1-216"/>
</dbReference>
<dbReference type="PDB" id="7OF7">
    <property type="method" value="EM"/>
    <property type="resolution" value="2.50 A"/>
    <property type="chains" value="V=1-216"/>
</dbReference>
<dbReference type="PDB" id="7OG4">
    <property type="method" value="EM"/>
    <property type="resolution" value="3.80 A"/>
    <property type="chains" value="XV=1-216"/>
</dbReference>
<dbReference type="PDB" id="7OI6">
    <property type="method" value="EM"/>
    <property type="resolution" value="5.70 A"/>
    <property type="chains" value="V=1-216"/>
</dbReference>
<dbReference type="PDB" id="7OI7">
    <property type="method" value="EM"/>
    <property type="resolution" value="3.50 A"/>
    <property type="chains" value="V=1-216"/>
</dbReference>
<dbReference type="PDB" id="7OI8">
    <property type="method" value="EM"/>
    <property type="resolution" value="3.50 A"/>
    <property type="chains" value="V=1-216"/>
</dbReference>
<dbReference type="PDB" id="7OI9">
    <property type="method" value="EM"/>
    <property type="resolution" value="3.30 A"/>
    <property type="chains" value="V=1-216"/>
</dbReference>
<dbReference type="PDB" id="7OIA">
    <property type="method" value="EM"/>
    <property type="resolution" value="3.20 A"/>
    <property type="chains" value="V=1-216"/>
</dbReference>
<dbReference type="PDB" id="7OIB">
    <property type="method" value="EM"/>
    <property type="resolution" value="3.30 A"/>
    <property type="chains" value="V=1-216"/>
</dbReference>
<dbReference type="PDB" id="7OIC">
    <property type="method" value="EM"/>
    <property type="resolution" value="3.10 A"/>
    <property type="chains" value="V=1-216"/>
</dbReference>
<dbReference type="PDB" id="7OID">
    <property type="method" value="EM"/>
    <property type="resolution" value="3.70 A"/>
    <property type="chains" value="V=1-216"/>
</dbReference>
<dbReference type="PDB" id="7OIE">
    <property type="method" value="EM"/>
    <property type="resolution" value="3.50 A"/>
    <property type="chains" value="V=1-216"/>
</dbReference>
<dbReference type="PDB" id="7PD3">
    <property type="method" value="EM"/>
    <property type="resolution" value="3.40 A"/>
    <property type="chains" value="V=1-216"/>
</dbReference>
<dbReference type="PDB" id="7PO4">
    <property type="method" value="EM"/>
    <property type="resolution" value="2.56 A"/>
    <property type="chains" value="V=1-216"/>
</dbReference>
<dbReference type="PDB" id="7QH6">
    <property type="method" value="EM"/>
    <property type="resolution" value="3.08 A"/>
    <property type="chains" value="V=1-216"/>
</dbReference>
<dbReference type="PDB" id="7QH7">
    <property type="method" value="EM"/>
    <property type="resolution" value="2.89 A"/>
    <property type="chains" value="V=169-216"/>
</dbReference>
<dbReference type="PDB" id="7QI4">
    <property type="method" value="EM"/>
    <property type="resolution" value="2.21 A"/>
    <property type="chains" value="V=1-216"/>
</dbReference>
<dbReference type="PDB" id="7QI5">
    <property type="method" value="EM"/>
    <property type="resolution" value="2.63 A"/>
    <property type="chains" value="V=1-216"/>
</dbReference>
<dbReference type="PDB" id="7QI6">
    <property type="method" value="EM"/>
    <property type="resolution" value="2.98 A"/>
    <property type="chains" value="V=1-216"/>
</dbReference>
<dbReference type="PDB" id="8ANY">
    <property type="method" value="EM"/>
    <property type="resolution" value="2.85 A"/>
    <property type="chains" value="V=1-216"/>
</dbReference>
<dbReference type="PDB" id="8K2A">
    <property type="method" value="EM"/>
    <property type="resolution" value="2.90 A"/>
    <property type="chains" value="LX=1-216"/>
</dbReference>
<dbReference type="PDB" id="8K2B">
    <property type="method" value="EM"/>
    <property type="resolution" value="3.40 A"/>
    <property type="chains" value="LX=1-216"/>
</dbReference>
<dbReference type="PDB" id="8OIR">
    <property type="method" value="EM"/>
    <property type="resolution" value="3.10 A"/>
    <property type="chains" value="BC=1-216"/>
</dbReference>
<dbReference type="PDB" id="8OIT">
    <property type="method" value="EM"/>
    <property type="resolution" value="2.90 A"/>
    <property type="chains" value="BC=1-216"/>
</dbReference>
<dbReference type="PDB" id="8PK0">
    <property type="method" value="EM"/>
    <property type="resolution" value="3.03 A"/>
    <property type="chains" value="V=1-216"/>
</dbReference>
<dbReference type="PDB" id="8QSJ">
    <property type="method" value="EM"/>
    <property type="resolution" value="3.00 A"/>
    <property type="chains" value="V=1-216"/>
</dbReference>
<dbReference type="PDB" id="8QU1">
    <property type="method" value="EM"/>
    <property type="resolution" value="2.74 A"/>
    <property type="chains" value="V=1-216"/>
</dbReference>
<dbReference type="PDB" id="8QU5">
    <property type="method" value="EM"/>
    <property type="resolution" value="2.42 A"/>
    <property type="chains" value="V=1-216"/>
</dbReference>
<dbReference type="PDB" id="8RRI">
    <property type="method" value="EM"/>
    <property type="resolution" value="2.40 A"/>
    <property type="chains" value="V=1-216"/>
</dbReference>
<dbReference type="PDB" id="8XT0">
    <property type="method" value="EM"/>
    <property type="resolution" value="3.20 A"/>
    <property type="chains" value="LX=1-216"/>
</dbReference>
<dbReference type="PDB" id="8XT1">
    <property type="method" value="EM"/>
    <property type="resolution" value="3.10 A"/>
    <property type="chains" value="LX=1-216"/>
</dbReference>
<dbReference type="PDB" id="8XT2">
    <property type="method" value="EM"/>
    <property type="resolution" value="3.30 A"/>
    <property type="chains" value="LX=1-216"/>
</dbReference>
<dbReference type="PDB" id="8XT3">
    <property type="method" value="EM"/>
    <property type="resolution" value="3.10 A"/>
    <property type="chains" value="LX=1-216"/>
</dbReference>
<dbReference type="PDBsum" id="3J7Y"/>
<dbReference type="PDBsum" id="3J9M"/>
<dbReference type="PDBsum" id="5OOL"/>
<dbReference type="PDBsum" id="5OOM"/>
<dbReference type="PDBsum" id="6I9R"/>
<dbReference type="PDBsum" id="6NU2"/>
<dbReference type="PDBsum" id="6NU3"/>
<dbReference type="PDBsum" id="6VLZ"/>
<dbReference type="PDBsum" id="6VMI"/>
<dbReference type="PDBsum" id="6ZM5"/>
<dbReference type="PDBsum" id="6ZM6"/>
<dbReference type="PDBsum" id="6ZS9"/>
<dbReference type="PDBsum" id="6ZSA"/>
<dbReference type="PDBsum" id="6ZSB"/>
<dbReference type="PDBsum" id="6ZSC"/>
<dbReference type="PDBsum" id="6ZSD"/>
<dbReference type="PDBsum" id="6ZSE"/>
<dbReference type="PDBsum" id="6ZSG"/>
<dbReference type="PDBsum" id="7A5F"/>
<dbReference type="PDBsum" id="7A5G"/>
<dbReference type="PDBsum" id="7A5H"/>
<dbReference type="PDBsum" id="7A5I"/>
<dbReference type="PDBsum" id="7A5J"/>
<dbReference type="PDBsum" id="7A5K"/>
<dbReference type="PDBsum" id="7L08"/>
<dbReference type="PDBsum" id="7L20"/>
<dbReference type="PDBsum" id="7O9K"/>
<dbReference type="PDBsum" id="7O9M"/>
<dbReference type="PDBsum" id="7ODR"/>
<dbReference type="PDBsum" id="7ODS"/>
<dbReference type="PDBsum" id="7ODT"/>
<dbReference type="PDBsum" id="7OF0"/>
<dbReference type="PDBsum" id="7OF2"/>
<dbReference type="PDBsum" id="7OF3"/>
<dbReference type="PDBsum" id="7OF4"/>
<dbReference type="PDBsum" id="7OF5"/>
<dbReference type="PDBsum" id="7OF6"/>
<dbReference type="PDBsum" id="7OF7"/>
<dbReference type="PDBsum" id="7OG4"/>
<dbReference type="PDBsum" id="7OI6"/>
<dbReference type="PDBsum" id="7OI7"/>
<dbReference type="PDBsum" id="7OI8"/>
<dbReference type="PDBsum" id="7OI9"/>
<dbReference type="PDBsum" id="7OIA"/>
<dbReference type="PDBsum" id="7OIB"/>
<dbReference type="PDBsum" id="7OIC"/>
<dbReference type="PDBsum" id="7OID"/>
<dbReference type="PDBsum" id="7OIE"/>
<dbReference type="PDBsum" id="7PD3"/>
<dbReference type="PDBsum" id="7PO4"/>
<dbReference type="PDBsum" id="7QH6"/>
<dbReference type="PDBsum" id="7QH7"/>
<dbReference type="PDBsum" id="7QI4"/>
<dbReference type="PDBsum" id="7QI5"/>
<dbReference type="PDBsum" id="7QI6"/>
<dbReference type="PDBsum" id="8ANY"/>
<dbReference type="PDBsum" id="8K2A"/>
<dbReference type="PDBsum" id="8K2B"/>
<dbReference type="PDBsum" id="8OIR"/>
<dbReference type="PDBsum" id="8OIT"/>
<dbReference type="PDBsum" id="8PK0"/>
<dbReference type="PDBsum" id="8QSJ"/>
<dbReference type="PDBsum" id="8QU1"/>
<dbReference type="PDBsum" id="8QU5"/>
<dbReference type="PDBsum" id="8RRI"/>
<dbReference type="PDBsum" id="8XT0"/>
<dbReference type="PDBsum" id="8XT1"/>
<dbReference type="PDBsum" id="8XT2"/>
<dbReference type="PDBsum" id="8XT3"/>
<dbReference type="EMDB" id="EMD-0514"/>
<dbReference type="EMDB" id="EMD-0515"/>
<dbReference type="EMDB" id="EMD-11278"/>
<dbReference type="EMDB" id="EMD-11279"/>
<dbReference type="EMDB" id="EMD-11390"/>
<dbReference type="EMDB" id="EMD-11391"/>
<dbReference type="EMDB" id="EMD-11392"/>
<dbReference type="EMDB" id="EMD-11393"/>
<dbReference type="EMDB" id="EMD-11394"/>
<dbReference type="EMDB" id="EMD-11395"/>
<dbReference type="EMDB" id="EMD-11397"/>
<dbReference type="EMDB" id="EMD-11641"/>
<dbReference type="EMDB" id="EMD-11642"/>
<dbReference type="EMDB" id="EMD-11643"/>
<dbReference type="EMDB" id="EMD-11644"/>
<dbReference type="EMDB" id="EMD-11645"/>
<dbReference type="EMDB" id="EMD-11646"/>
<dbReference type="EMDB" id="EMD-12763"/>
<dbReference type="EMDB" id="EMD-12764"/>
<dbReference type="EMDB" id="EMD-12845"/>
<dbReference type="EMDB" id="EMD-12846"/>
<dbReference type="EMDB" id="EMD-12847"/>
<dbReference type="EMDB" id="EMD-12865"/>
<dbReference type="EMDB" id="EMD-12867"/>
<dbReference type="EMDB" id="EMD-12868"/>
<dbReference type="EMDB" id="EMD-12869"/>
<dbReference type="EMDB" id="EMD-12870"/>
<dbReference type="EMDB" id="EMD-12871"/>
<dbReference type="EMDB" id="EMD-12872"/>
<dbReference type="EMDB" id="EMD-12877"/>
<dbReference type="EMDB" id="EMD-12919"/>
<dbReference type="EMDB" id="EMD-12920"/>
<dbReference type="EMDB" id="EMD-12921"/>
<dbReference type="EMDB" id="EMD-12922"/>
<dbReference type="EMDB" id="EMD-12923"/>
<dbReference type="EMDB" id="EMD-12924"/>
<dbReference type="EMDB" id="EMD-12925"/>
<dbReference type="EMDB" id="EMD-12926"/>
<dbReference type="EMDB" id="EMD-12927"/>
<dbReference type="EMDB" id="EMD-13329"/>
<dbReference type="EMDB" id="EMD-13562"/>
<dbReference type="EMDB" id="EMD-13965"/>
<dbReference type="EMDB" id="EMD-13967"/>
<dbReference type="EMDB" id="EMD-13980"/>
<dbReference type="EMDB" id="EMD-13981"/>
<dbReference type="EMDB" id="EMD-13982"/>
<dbReference type="EMDB" id="EMD-15544"/>
<dbReference type="EMDB" id="EMD-16897"/>
<dbReference type="EMDB" id="EMD-16899"/>
<dbReference type="EMDB" id="EMD-17719"/>
<dbReference type="EMDB" id="EMD-19460"/>
<dbReference type="EMDB" id="EMD-21233"/>
<dbReference type="EMDB" id="EMD-21242"/>
<dbReference type="EMDB" id="EMD-23096"/>
<dbReference type="EMDB" id="EMD-23121"/>
<dbReference type="EMDB" id="EMD-36836"/>
<dbReference type="EMDB" id="EMD-36837"/>
<dbReference type="EMDB" id="EMD-3842"/>
<dbReference type="EMDB" id="EMD-3843"/>
<dbReference type="EMDB" id="EMD-38632"/>
<dbReference type="EMDB" id="EMD-38633"/>
<dbReference type="EMDB" id="EMD-38634"/>
<dbReference type="EMDB" id="EMD-38635"/>
<dbReference type="EMDB" id="EMD-4434"/>
<dbReference type="SMR" id="Q96A35"/>
<dbReference type="BioGRID" id="122732">
    <property type="interactions" value="223"/>
</dbReference>
<dbReference type="ComplexPortal" id="CPX-5226">
    <property type="entry name" value="39S mitochondrial large ribosomal subunit"/>
</dbReference>
<dbReference type="CORUM" id="Q96A35"/>
<dbReference type="FunCoup" id="Q96A35">
    <property type="interactions" value="1760"/>
</dbReference>
<dbReference type="IntAct" id="Q96A35">
    <property type="interactions" value="96"/>
</dbReference>
<dbReference type="MINT" id="Q96A35"/>
<dbReference type="STRING" id="9606.ENSP00000354525"/>
<dbReference type="GlyGen" id="Q96A35">
    <property type="glycosylation" value="1 site, 1 O-linked glycan (1 site)"/>
</dbReference>
<dbReference type="iPTMnet" id="Q96A35"/>
<dbReference type="PhosphoSitePlus" id="Q96A35"/>
<dbReference type="SwissPalm" id="Q96A35"/>
<dbReference type="BioMuta" id="MRPL24"/>
<dbReference type="DMDM" id="74751733"/>
<dbReference type="jPOST" id="Q96A35"/>
<dbReference type="MassIVE" id="Q96A35"/>
<dbReference type="PaxDb" id="9606-ENSP00000354525"/>
<dbReference type="PeptideAtlas" id="Q96A35"/>
<dbReference type="ProteomicsDB" id="75904"/>
<dbReference type="Pumba" id="Q96A35"/>
<dbReference type="TopDownProteomics" id="Q96A35"/>
<dbReference type="Antibodypedia" id="34225">
    <property type="antibodies" value="194 antibodies from 27 providers"/>
</dbReference>
<dbReference type="DNASU" id="79590"/>
<dbReference type="Ensembl" id="ENST00000361531.6">
    <property type="protein sequence ID" value="ENSP00000354525.2"/>
    <property type="gene ID" value="ENSG00000143314.12"/>
</dbReference>
<dbReference type="Ensembl" id="ENST00000368211.8">
    <property type="protein sequence ID" value="ENSP00000357194.4"/>
    <property type="gene ID" value="ENSG00000143314.12"/>
</dbReference>
<dbReference type="GeneID" id="79590"/>
<dbReference type="KEGG" id="hsa:79590"/>
<dbReference type="MANE-Select" id="ENST00000361531.6">
    <property type="protein sequence ID" value="ENSP00000354525.2"/>
    <property type="RefSeq nucleotide sequence ID" value="NM_145729.3"/>
    <property type="RefSeq protein sequence ID" value="NP_663781.1"/>
</dbReference>
<dbReference type="UCSC" id="uc001fpw.2">
    <property type="organism name" value="human"/>
</dbReference>
<dbReference type="AGR" id="HGNC:14037"/>
<dbReference type="CTD" id="79590"/>
<dbReference type="DisGeNET" id="79590"/>
<dbReference type="GeneCards" id="MRPL24"/>
<dbReference type="HGNC" id="HGNC:14037">
    <property type="gene designation" value="MRPL24"/>
</dbReference>
<dbReference type="HPA" id="ENSG00000143314">
    <property type="expression patterns" value="Low tissue specificity"/>
</dbReference>
<dbReference type="MIM" id="611836">
    <property type="type" value="gene"/>
</dbReference>
<dbReference type="neXtProt" id="NX_Q96A35"/>
<dbReference type="OpenTargets" id="ENSG00000143314"/>
<dbReference type="PharmGKB" id="PA30954"/>
<dbReference type="VEuPathDB" id="HostDB:ENSG00000143314"/>
<dbReference type="eggNOG" id="KOG1708">
    <property type="taxonomic scope" value="Eukaryota"/>
</dbReference>
<dbReference type="GeneTree" id="ENSGT00390000014542"/>
<dbReference type="HOGENOM" id="CLU_093315_0_1_1"/>
<dbReference type="InParanoid" id="Q96A35"/>
<dbReference type="OMA" id="DFEWRFT"/>
<dbReference type="OrthoDB" id="359154at2759"/>
<dbReference type="PAN-GO" id="Q96A35">
    <property type="GO annotations" value="2 GO annotations based on evolutionary models"/>
</dbReference>
<dbReference type="PhylomeDB" id="Q96A35"/>
<dbReference type="TreeFam" id="TF105984"/>
<dbReference type="PathwayCommons" id="Q96A35"/>
<dbReference type="Reactome" id="R-HSA-5368286">
    <property type="pathway name" value="Mitochondrial translation initiation"/>
</dbReference>
<dbReference type="Reactome" id="R-HSA-5389840">
    <property type="pathway name" value="Mitochondrial translation elongation"/>
</dbReference>
<dbReference type="Reactome" id="R-HSA-5419276">
    <property type="pathway name" value="Mitochondrial translation termination"/>
</dbReference>
<dbReference type="SignaLink" id="Q96A35"/>
<dbReference type="SIGNOR" id="Q96A35"/>
<dbReference type="BioGRID-ORCS" id="79590">
    <property type="hits" value="272 hits in 1171 CRISPR screens"/>
</dbReference>
<dbReference type="ChiTaRS" id="MRPL24">
    <property type="organism name" value="human"/>
</dbReference>
<dbReference type="EvolutionaryTrace" id="Q96A35"/>
<dbReference type="GeneWiki" id="MRPL24"/>
<dbReference type="GenomeRNAi" id="79590"/>
<dbReference type="Pharos" id="Q96A35">
    <property type="development level" value="Tdark"/>
</dbReference>
<dbReference type="PRO" id="PR:Q96A35"/>
<dbReference type="Proteomes" id="UP000005640">
    <property type="component" value="Chromosome 1"/>
</dbReference>
<dbReference type="RNAct" id="Q96A35">
    <property type="molecule type" value="protein"/>
</dbReference>
<dbReference type="Bgee" id="ENSG00000143314">
    <property type="expression patterns" value="Expressed in body of pancreas and 194 other cell types or tissues"/>
</dbReference>
<dbReference type="ExpressionAtlas" id="Q96A35">
    <property type="expression patterns" value="baseline and differential"/>
</dbReference>
<dbReference type="GO" id="GO:0005743">
    <property type="term" value="C:mitochondrial inner membrane"/>
    <property type="evidence" value="ECO:0000304"/>
    <property type="project" value="Reactome"/>
</dbReference>
<dbReference type="GO" id="GO:0005762">
    <property type="term" value="C:mitochondrial large ribosomal subunit"/>
    <property type="evidence" value="ECO:0000314"/>
    <property type="project" value="UniProtKB"/>
</dbReference>
<dbReference type="GO" id="GO:0005739">
    <property type="term" value="C:mitochondrion"/>
    <property type="evidence" value="ECO:0000314"/>
    <property type="project" value="UniProtKB"/>
</dbReference>
<dbReference type="GO" id="GO:0003723">
    <property type="term" value="F:RNA binding"/>
    <property type="evidence" value="ECO:0007669"/>
    <property type="project" value="InterPro"/>
</dbReference>
<dbReference type="GO" id="GO:0003735">
    <property type="term" value="F:structural constituent of ribosome"/>
    <property type="evidence" value="ECO:0007669"/>
    <property type="project" value="InterPro"/>
</dbReference>
<dbReference type="GO" id="GO:0032543">
    <property type="term" value="P:mitochondrial translation"/>
    <property type="evidence" value="ECO:0000303"/>
    <property type="project" value="ComplexPortal"/>
</dbReference>
<dbReference type="GO" id="GO:0006412">
    <property type="term" value="P:translation"/>
    <property type="evidence" value="ECO:0000318"/>
    <property type="project" value="GO_Central"/>
</dbReference>
<dbReference type="CDD" id="cd06089">
    <property type="entry name" value="KOW_RPL26"/>
    <property type="match status" value="1"/>
</dbReference>
<dbReference type="FunFam" id="2.30.30.30:FF:000032">
    <property type="entry name" value="39S ribosomal protein L24, mitochondrial"/>
    <property type="match status" value="1"/>
</dbReference>
<dbReference type="Gene3D" id="2.30.30.30">
    <property type="match status" value="1"/>
</dbReference>
<dbReference type="InterPro" id="IPR005824">
    <property type="entry name" value="KOW"/>
</dbReference>
<dbReference type="InterPro" id="IPR014722">
    <property type="entry name" value="Rib_uL2_dom2"/>
</dbReference>
<dbReference type="InterPro" id="IPR003256">
    <property type="entry name" value="Ribosomal_uL24"/>
</dbReference>
<dbReference type="InterPro" id="IPR005825">
    <property type="entry name" value="Ribosomal_uL24_CS"/>
</dbReference>
<dbReference type="InterPro" id="IPR041988">
    <property type="entry name" value="Ribosomal_uL24_KOW"/>
</dbReference>
<dbReference type="InterPro" id="IPR008991">
    <property type="entry name" value="Translation_prot_SH3-like_sf"/>
</dbReference>
<dbReference type="NCBIfam" id="TIGR01079">
    <property type="entry name" value="rplX_bact"/>
    <property type="match status" value="1"/>
</dbReference>
<dbReference type="PANTHER" id="PTHR12903">
    <property type="entry name" value="MITOCHONDRIAL RIBOSOMAL PROTEIN L24"/>
    <property type="match status" value="1"/>
</dbReference>
<dbReference type="Pfam" id="PF00467">
    <property type="entry name" value="KOW"/>
    <property type="match status" value="1"/>
</dbReference>
<dbReference type="Pfam" id="PF17136">
    <property type="entry name" value="ribosomal_L24"/>
    <property type="match status" value="1"/>
</dbReference>
<dbReference type="SMART" id="SM00739">
    <property type="entry name" value="KOW"/>
    <property type="match status" value="1"/>
</dbReference>
<dbReference type="SUPFAM" id="SSF50104">
    <property type="entry name" value="Translation proteins SH3-like domain"/>
    <property type="match status" value="1"/>
</dbReference>
<dbReference type="PROSITE" id="PS01108">
    <property type="entry name" value="RIBOSOMAL_L24"/>
    <property type="match status" value="1"/>
</dbReference>
<keyword id="KW-0002">3D-structure</keyword>
<keyword id="KW-0496">Mitochondrion</keyword>
<keyword id="KW-0597">Phosphoprotein</keyword>
<keyword id="KW-1267">Proteomics identification</keyword>
<keyword id="KW-1185">Reference proteome</keyword>
<keyword id="KW-0687">Ribonucleoprotein</keyword>
<keyword id="KW-0689">Ribosomal protein</keyword>
<keyword id="KW-0809">Transit peptide</keyword>
<evidence type="ECO:0000250" key="1"/>
<evidence type="ECO:0000269" key="2">
    <source>
    </source>
</evidence>
<evidence type="ECO:0000269" key="3">
    <source>
    </source>
</evidence>
<evidence type="ECO:0000269" key="4">
    <source>
    </source>
</evidence>
<evidence type="ECO:0000269" key="5">
    <source>
    </source>
</evidence>
<evidence type="ECO:0000303" key="6">
    <source>
    </source>
</evidence>
<evidence type="ECO:0000305" key="7"/>
<evidence type="ECO:0007744" key="8">
    <source>
        <dbReference type="PDB" id="3J7Y"/>
    </source>
</evidence>
<evidence type="ECO:0007744" key="9">
    <source>
        <dbReference type="PDB" id="3J9M"/>
    </source>
</evidence>
<evidence type="ECO:0007744" key="10">
    <source>
        <dbReference type="PDB" id="5OOL"/>
    </source>
</evidence>
<evidence type="ECO:0007744" key="11">
    <source>
        <dbReference type="PDB" id="5OOM"/>
    </source>
</evidence>
<evidence type="ECO:0007744" key="12">
    <source>
        <dbReference type="PDB" id="7QH6"/>
    </source>
</evidence>
<evidence type="ECO:0007744" key="13">
    <source>
        <dbReference type="PDB" id="7QH7"/>
    </source>
</evidence>
<evidence type="ECO:0007744" key="14">
    <source>
    </source>
</evidence>
<evidence type="ECO:0007829" key="15">
    <source>
        <dbReference type="PDB" id="3J7Y"/>
    </source>
</evidence>
<evidence type="ECO:0007829" key="16">
    <source>
        <dbReference type="PDB" id="5OOL"/>
    </source>
</evidence>
<evidence type="ECO:0007829" key="17">
    <source>
        <dbReference type="PDB" id="7OF0"/>
    </source>
</evidence>
<evidence type="ECO:0007829" key="18">
    <source>
        <dbReference type="PDB" id="7OI9"/>
    </source>
</evidence>
<evidence type="ECO:0007829" key="19">
    <source>
        <dbReference type="PDB" id="8QU1"/>
    </source>
</evidence>
<evidence type="ECO:0007829" key="20">
    <source>
        <dbReference type="PDB" id="8QU5"/>
    </source>
</evidence>
<sequence>MRLSALLALASKVTLPPHYRYGMSPPGSVADKRKNPPWIRRRPVVVEPISDEDWYLFCGDTVEILEGKDAGKQGKVVQVIRQRNWVVVGGLNTHYRYIGKTMDYRGTMIPSEAPLLHRQVKLVDPMDRKPTEIEWRFTEAGERVRVSTRSGRIIPKPEFPRADGIVPETWIDGPKDTSVEDALERTYVPCLKTLQEEVMEAMGIKETRKYKKVYWY</sequence>
<reference key="1">
    <citation type="journal article" date="2004" name="Nat. Genet.">
        <title>Complete sequencing and characterization of 21,243 full-length human cDNAs.</title>
        <authorList>
            <person name="Ota T."/>
            <person name="Suzuki Y."/>
            <person name="Nishikawa T."/>
            <person name="Otsuki T."/>
            <person name="Sugiyama T."/>
            <person name="Irie R."/>
            <person name="Wakamatsu A."/>
            <person name="Hayashi K."/>
            <person name="Sato H."/>
            <person name="Nagai K."/>
            <person name="Kimura K."/>
            <person name="Makita H."/>
            <person name="Sekine M."/>
            <person name="Obayashi M."/>
            <person name="Nishi T."/>
            <person name="Shibahara T."/>
            <person name="Tanaka T."/>
            <person name="Ishii S."/>
            <person name="Yamamoto J."/>
            <person name="Saito K."/>
            <person name="Kawai Y."/>
            <person name="Isono Y."/>
            <person name="Nakamura Y."/>
            <person name="Nagahari K."/>
            <person name="Murakami K."/>
            <person name="Yasuda T."/>
            <person name="Iwayanagi T."/>
            <person name="Wagatsuma M."/>
            <person name="Shiratori A."/>
            <person name="Sudo H."/>
            <person name="Hosoiri T."/>
            <person name="Kaku Y."/>
            <person name="Kodaira H."/>
            <person name="Kondo H."/>
            <person name="Sugawara M."/>
            <person name="Takahashi M."/>
            <person name="Kanda K."/>
            <person name="Yokoi T."/>
            <person name="Furuya T."/>
            <person name="Kikkawa E."/>
            <person name="Omura Y."/>
            <person name="Abe K."/>
            <person name="Kamihara K."/>
            <person name="Katsuta N."/>
            <person name="Sato K."/>
            <person name="Tanikawa M."/>
            <person name="Yamazaki M."/>
            <person name="Ninomiya K."/>
            <person name="Ishibashi T."/>
            <person name="Yamashita H."/>
            <person name="Murakawa K."/>
            <person name="Fujimori K."/>
            <person name="Tanai H."/>
            <person name="Kimata M."/>
            <person name="Watanabe M."/>
            <person name="Hiraoka S."/>
            <person name="Chiba Y."/>
            <person name="Ishida S."/>
            <person name="Ono Y."/>
            <person name="Takiguchi S."/>
            <person name="Watanabe S."/>
            <person name="Yosida M."/>
            <person name="Hotuta T."/>
            <person name="Kusano J."/>
            <person name="Kanehori K."/>
            <person name="Takahashi-Fujii A."/>
            <person name="Hara H."/>
            <person name="Tanase T.-O."/>
            <person name="Nomura Y."/>
            <person name="Togiya S."/>
            <person name="Komai F."/>
            <person name="Hara R."/>
            <person name="Takeuchi K."/>
            <person name="Arita M."/>
            <person name="Imose N."/>
            <person name="Musashino K."/>
            <person name="Yuuki H."/>
            <person name="Oshima A."/>
            <person name="Sasaki N."/>
            <person name="Aotsuka S."/>
            <person name="Yoshikawa Y."/>
            <person name="Matsunawa H."/>
            <person name="Ichihara T."/>
            <person name="Shiohata N."/>
            <person name="Sano S."/>
            <person name="Moriya S."/>
            <person name="Momiyama H."/>
            <person name="Satoh N."/>
            <person name="Takami S."/>
            <person name="Terashima Y."/>
            <person name="Suzuki O."/>
            <person name="Nakagawa S."/>
            <person name="Senoh A."/>
            <person name="Mizoguchi H."/>
            <person name="Goto Y."/>
            <person name="Shimizu F."/>
            <person name="Wakebe H."/>
            <person name="Hishigaki H."/>
            <person name="Watanabe T."/>
            <person name="Sugiyama A."/>
            <person name="Takemoto M."/>
            <person name="Kawakami B."/>
            <person name="Yamazaki M."/>
            <person name="Watanabe K."/>
            <person name="Kumagai A."/>
            <person name="Itakura S."/>
            <person name="Fukuzumi Y."/>
            <person name="Fujimori Y."/>
            <person name="Komiyama M."/>
            <person name="Tashiro H."/>
            <person name="Tanigami A."/>
            <person name="Fujiwara T."/>
            <person name="Ono T."/>
            <person name="Yamada K."/>
            <person name="Fujii Y."/>
            <person name="Ozaki K."/>
            <person name="Hirao M."/>
            <person name="Ohmori Y."/>
            <person name="Kawabata A."/>
            <person name="Hikiji T."/>
            <person name="Kobatake N."/>
            <person name="Inagaki H."/>
            <person name="Ikema Y."/>
            <person name="Okamoto S."/>
            <person name="Okitani R."/>
            <person name="Kawakami T."/>
            <person name="Noguchi S."/>
            <person name="Itoh T."/>
            <person name="Shigeta K."/>
            <person name="Senba T."/>
            <person name="Matsumura K."/>
            <person name="Nakajima Y."/>
            <person name="Mizuno T."/>
            <person name="Morinaga M."/>
            <person name="Sasaki M."/>
            <person name="Togashi T."/>
            <person name="Oyama M."/>
            <person name="Hata H."/>
            <person name="Watanabe M."/>
            <person name="Komatsu T."/>
            <person name="Mizushima-Sugano J."/>
            <person name="Satoh T."/>
            <person name="Shirai Y."/>
            <person name="Takahashi Y."/>
            <person name="Nakagawa K."/>
            <person name="Okumura K."/>
            <person name="Nagase T."/>
            <person name="Nomura N."/>
            <person name="Kikuchi H."/>
            <person name="Masuho Y."/>
            <person name="Yamashita R."/>
            <person name="Nakai K."/>
            <person name="Yada T."/>
            <person name="Nakamura Y."/>
            <person name="Ohara O."/>
            <person name="Isogai T."/>
            <person name="Sugano S."/>
        </authorList>
    </citation>
    <scope>NUCLEOTIDE SEQUENCE [LARGE SCALE MRNA]</scope>
    <source>
        <tissue>Adipose tissue</tissue>
    </source>
</reference>
<reference key="2">
    <citation type="submission" date="2004-06" db="EMBL/GenBank/DDBJ databases">
        <title>Cloning of human full open reading frames in Gateway(TM) system entry vector (pDONR201).</title>
        <authorList>
            <person name="Ebert L."/>
            <person name="Schick M."/>
            <person name="Neubert P."/>
            <person name="Schatten R."/>
            <person name="Henze S."/>
            <person name="Korn B."/>
        </authorList>
    </citation>
    <scope>NUCLEOTIDE SEQUENCE [LARGE SCALE MRNA]</scope>
</reference>
<reference key="3">
    <citation type="submission" date="2005-04" db="EMBL/GenBank/DDBJ databases">
        <authorList>
            <person name="Suzuki Y."/>
            <person name="Sugano S."/>
            <person name="Totoki Y."/>
            <person name="Toyoda A."/>
            <person name="Takeda T."/>
            <person name="Sakaki Y."/>
            <person name="Tanaka A."/>
            <person name="Yokoyama S."/>
        </authorList>
    </citation>
    <scope>NUCLEOTIDE SEQUENCE [LARGE SCALE MRNA]</scope>
    <source>
        <tissue>Adipose tissue</tissue>
    </source>
</reference>
<reference key="4">
    <citation type="journal article" date="2006" name="Nature">
        <title>The DNA sequence and biological annotation of human chromosome 1.</title>
        <authorList>
            <person name="Gregory S.G."/>
            <person name="Barlow K.F."/>
            <person name="McLay K.E."/>
            <person name="Kaul R."/>
            <person name="Swarbreck D."/>
            <person name="Dunham A."/>
            <person name="Scott C.E."/>
            <person name="Howe K.L."/>
            <person name="Woodfine K."/>
            <person name="Spencer C.C.A."/>
            <person name="Jones M.C."/>
            <person name="Gillson C."/>
            <person name="Searle S."/>
            <person name="Zhou Y."/>
            <person name="Kokocinski F."/>
            <person name="McDonald L."/>
            <person name="Evans R."/>
            <person name="Phillips K."/>
            <person name="Atkinson A."/>
            <person name="Cooper R."/>
            <person name="Jones C."/>
            <person name="Hall R.E."/>
            <person name="Andrews T.D."/>
            <person name="Lloyd C."/>
            <person name="Ainscough R."/>
            <person name="Almeida J.P."/>
            <person name="Ambrose K.D."/>
            <person name="Anderson F."/>
            <person name="Andrew R.W."/>
            <person name="Ashwell R.I.S."/>
            <person name="Aubin K."/>
            <person name="Babbage A.K."/>
            <person name="Bagguley C.L."/>
            <person name="Bailey J."/>
            <person name="Beasley H."/>
            <person name="Bethel G."/>
            <person name="Bird C.P."/>
            <person name="Bray-Allen S."/>
            <person name="Brown J.Y."/>
            <person name="Brown A.J."/>
            <person name="Buckley D."/>
            <person name="Burton J."/>
            <person name="Bye J."/>
            <person name="Carder C."/>
            <person name="Chapman J.C."/>
            <person name="Clark S.Y."/>
            <person name="Clarke G."/>
            <person name="Clee C."/>
            <person name="Cobley V."/>
            <person name="Collier R.E."/>
            <person name="Corby N."/>
            <person name="Coville G.J."/>
            <person name="Davies J."/>
            <person name="Deadman R."/>
            <person name="Dunn M."/>
            <person name="Earthrowl M."/>
            <person name="Ellington A.G."/>
            <person name="Errington H."/>
            <person name="Frankish A."/>
            <person name="Frankland J."/>
            <person name="French L."/>
            <person name="Garner P."/>
            <person name="Garnett J."/>
            <person name="Gay L."/>
            <person name="Ghori M.R.J."/>
            <person name="Gibson R."/>
            <person name="Gilby L.M."/>
            <person name="Gillett W."/>
            <person name="Glithero R.J."/>
            <person name="Grafham D.V."/>
            <person name="Griffiths C."/>
            <person name="Griffiths-Jones S."/>
            <person name="Grocock R."/>
            <person name="Hammond S."/>
            <person name="Harrison E.S.I."/>
            <person name="Hart E."/>
            <person name="Haugen E."/>
            <person name="Heath P.D."/>
            <person name="Holmes S."/>
            <person name="Holt K."/>
            <person name="Howden P.J."/>
            <person name="Hunt A.R."/>
            <person name="Hunt S.E."/>
            <person name="Hunter G."/>
            <person name="Isherwood J."/>
            <person name="James R."/>
            <person name="Johnson C."/>
            <person name="Johnson D."/>
            <person name="Joy A."/>
            <person name="Kay M."/>
            <person name="Kershaw J.K."/>
            <person name="Kibukawa M."/>
            <person name="Kimberley A.M."/>
            <person name="King A."/>
            <person name="Knights A.J."/>
            <person name="Lad H."/>
            <person name="Laird G."/>
            <person name="Lawlor S."/>
            <person name="Leongamornlert D.A."/>
            <person name="Lloyd D.M."/>
            <person name="Loveland J."/>
            <person name="Lovell J."/>
            <person name="Lush M.J."/>
            <person name="Lyne R."/>
            <person name="Martin S."/>
            <person name="Mashreghi-Mohammadi M."/>
            <person name="Matthews L."/>
            <person name="Matthews N.S.W."/>
            <person name="McLaren S."/>
            <person name="Milne S."/>
            <person name="Mistry S."/>
            <person name="Moore M.J.F."/>
            <person name="Nickerson T."/>
            <person name="O'Dell C.N."/>
            <person name="Oliver K."/>
            <person name="Palmeiri A."/>
            <person name="Palmer S.A."/>
            <person name="Parker A."/>
            <person name="Patel D."/>
            <person name="Pearce A.V."/>
            <person name="Peck A.I."/>
            <person name="Pelan S."/>
            <person name="Phelps K."/>
            <person name="Phillimore B.J."/>
            <person name="Plumb R."/>
            <person name="Rajan J."/>
            <person name="Raymond C."/>
            <person name="Rouse G."/>
            <person name="Saenphimmachak C."/>
            <person name="Sehra H.K."/>
            <person name="Sheridan E."/>
            <person name="Shownkeen R."/>
            <person name="Sims S."/>
            <person name="Skuce C.D."/>
            <person name="Smith M."/>
            <person name="Steward C."/>
            <person name="Subramanian S."/>
            <person name="Sycamore N."/>
            <person name="Tracey A."/>
            <person name="Tromans A."/>
            <person name="Van Helmond Z."/>
            <person name="Wall M."/>
            <person name="Wallis J.M."/>
            <person name="White S."/>
            <person name="Whitehead S.L."/>
            <person name="Wilkinson J.E."/>
            <person name="Willey D.L."/>
            <person name="Williams H."/>
            <person name="Wilming L."/>
            <person name="Wray P.W."/>
            <person name="Wu Z."/>
            <person name="Coulson A."/>
            <person name="Vaudin M."/>
            <person name="Sulston J.E."/>
            <person name="Durbin R.M."/>
            <person name="Hubbard T."/>
            <person name="Wooster R."/>
            <person name="Dunham I."/>
            <person name="Carter N.P."/>
            <person name="McVean G."/>
            <person name="Ross M.T."/>
            <person name="Harrow J."/>
            <person name="Olson M.V."/>
            <person name="Beck S."/>
            <person name="Rogers J."/>
            <person name="Bentley D.R."/>
        </authorList>
    </citation>
    <scope>NUCLEOTIDE SEQUENCE [LARGE SCALE GENOMIC DNA]</scope>
</reference>
<reference key="5">
    <citation type="submission" date="2005-09" db="EMBL/GenBank/DDBJ databases">
        <authorList>
            <person name="Mural R.J."/>
            <person name="Istrail S."/>
            <person name="Sutton G.G."/>
            <person name="Florea L."/>
            <person name="Halpern A.L."/>
            <person name="Mobarry C.M."/>
            <person name="Lippert R."/>
            <person name="Walenz B."/>
            <person name="Shatkay H."/>
            <person name="Dew I."/>
            <person name="Miller J.R."/>
            <person name="Flanigan M.J."/>
            <person name="Edwards N.J."/>
            <person name="Bolanos R."/>
            <person name="Fasulo D."/>
            <person name="Halldorsson B.V."/>
            <person name="Hannenhalli S."/>
            <person name="Turner R."/>
            <person name="Yooseph S."/>
            <person name="Lu F."/>
            <person name="Nusskern D.R."/>
            <person name="Shue B.C."/>
            <person name="Zheng X.H."/>
            <person name="Zhong F."/>
            <person name="Delcher A.L."/>
            <person name="Huson D.H."/>
            <person name="Kravitz S.A."/>
            <person name="Mouchard L."/>
            <person name="Reinert K."/>
            <person name="Remington K.A."/>
            <person name="Clark A.G."/>
            <person name="Waterman M.S."/>
            <person name="Eichler E.E."/>
            <person name="Adams M.D."/>
            <person name="Hunkapiller M.W."/>
            <person name="Myers E.W."/>
            <person name="Venter J.C."/>
        </authorList>
    </citation>
    <scope>NUCLEOTIDE SEQUENCE [LARGE SCALE GENOMIC DNA]</scope>
</reference>
<reference key="6">
    <citation type="journal article" date="2004" name="Genome Res.">
        <title>The status, quality, and expansion of the NIH full-length cDNA project: the Mammalian Gene Collection (MGC).</title>
        <authorList>
            <consortium name="The MGC Project Team"/>
        </authorList>
    </citation>
    <scope>NUCLEOTIDE SEQUENCE [LARGE SCALE MRNA]</scope>
    <source>
        <tissue>Bone marrow</tissue>
        <tissue>Ovary</tissue>
    </source>
</reference>
<reference key="7">
    <citation type="journal article" date="2001" name="Genomics">
        <title>The human mitochondrial ribosomal protein genes: mapping of 54 genes to the chromosomes and implications for human disorders.</title>
        <authorList>
            <person name="Kenmochi N."/>
            <person name="Suzuki T."/>
            <person name="Uechi T."/>
            <person name="Magoori M."/>
            <person name="Kuniba M."/>
            <person name="Higa S."/>
            <person name="Watanabe K."/>
            <person name="Tanaka T."/>
        </authorList>
    </citation>
    <scope>NUCLEOTIDE SEQUENCE [GENOMIC DNA] OF 129-216</scope>
</reference>
<reference key="8">
    <citation type="journal article" date="2011" name="BMC Syst. Biol.">
        <title>Initial characterization of the human central proteome.</title>
        <authorList>
            <person name="Burkard T.R."/>
            <person name="Planyavsky M."/>
            <person name="Kaupe I."/>
            <person name="Breitwieser F.P."/>
            <person name="Buerckstuemmer T."/>
            <person name="Bennett K.L."/>
            <person name="Superti-Furga G."/>
            <person name="Colinge J."/>
        </authorList>
    </citation>
    <scope>IDENTIFICATION BY MASS SPECTROMETRY [LARGE SCALE ANALYSIS]</scope>
</reference>
<reference key="9">
    <citation type="journal article" date="2013" name="J. Proteome Res.">
        <title>Toward a comprehensive characterization of a human cancer cell phosphoproteome.</title>
        <authorList>
            <person name="Zhou H."/>
            <person name="Di Palma S."/>
            <person name="Preisinger C."/>
            <person name="Peng M."/>
            <person name="Polat A.N."/>
            <person name="Heck A.J."/>
            <person name="Mohammed S."/>
        </authorList>
    </citation>
    <scope>PHOSPHORYLATION [LARGE SCALE ANALYSIS] AT SER-24</scope>
    <scope>IDENTIFICATION BY MASS SPECTROMETRY [LARGE SCALE ANALYSIS]</scope>
    <source>
        <tissue>Erythroleukemia</tissue>
    </source>
</reference>
<reference key="10">
    <citation type="journal article" date="2015" name="Proteomics">
        <title>N-terminome analysis of the human mitochondrial proteome.</title>
        <authorList>
            <person name="Vaca Jacome A.S."/>
            <person name="Rabilloud T."/>
            <person name="Schaeffer-Reiss C."/>
            <person name="Rompais M."/>
            <person name="Ayoub D."/>
            <person name="Lane L."/>
            <person name="Bairoch A."/>
            <person name="Van Dorsselaer A."/>
            <person name="Carapito C."/>
        </authorList>
    </citation>
    <scope>IDENTIFICATION BY MASS SPECTROMETRY [LARGE SCALE ANALYSIS]</scope>
</reference>
<reference evidence="8" key="11">
    <citation type="journal article" date="2014" name="Science">
        <title>Structure of the large ribosomal subunit from human mitochondria.</title>
        <authorList>
            <person name="Brown A."/>
            <person name="Amunts A."/>
            <person name="Bai X.C."/>
            <person name="Sugimoto Y."/>
            <person name="Edwards P.C."/>
            <person name="Murshudov G."/>
            <person name="Scheres S.H."/>
            <person name="Ramakrishnan V."/>
        </authorList>
    </citation>
    <scope>STRUCTURE BY ELECTRON MICROSCOPY (3.40 ANGSTROMS)</scope>
    <scope>SUBCELLULAR LOCATION</scope>
    <scope>SUBUNIT</scope>
</reference>
<reference evidence="9" key="12">
    <citation type="journal article" date="2015" name="Science">
        <title>Ribosome. The structure of the human mitochondrial ribosome.</title>
        <authorList>
            <person name="Amunts A."/>
            <person name="Brown A."/>
            <person name="Toots J."/>
            <person name="Scheres S.H."/>
            <person name="Ramakrishnan V."/>
        </authorList>
    </citation>
    <scope>STRUCTURE BY ELECTRON MICROSCOPY (3.50 ANGSTROMS)</scope>
    <scope>SUBCELLULAR LOCATION</scope>
    <scope>SUBUNIT</scope>
</reference>
<reference evidence="10 11" key="13">
    <citation type="journal article" date="2017" name="Nat. Struct. Mol. Biol.">
        <title>Structures of the human mitochondrial ribosome in native states of assembly.</title>
        <authorList>
            <person name="Brown A."/>
            <person name="Rathore S."/>
            <person name="Kimanius D."/>
            <person name="Aibara S."/>
            <person name="Bai X.C."/>
            <person name="Rorbach J."/>
            <person name="Amunts A."/>
            <person name="Ramakrishnan V."/>
        </authorList>
    </citation>
    <scope>STRUCTURE BY ELECTRON MICROSCOPY (3.03 ANGSTROMS)</scope>
    <scope>SUBCELLULAR LOCATION</scope>
    <scope>SUBUNIT</scope>
</reference>
<reference evidence="12 13" key="14">
    <citation type="journal article" date="2022" name="Nat. Commun.">
        <title>A late-stage assembly checkpoint of the human mitochondrial ribosome large subunit.</title>
        <authorList>
            <person name="Rebelo-Guiomar P."/>
            <person name="Pellegrino S."/>
            <person name="Dent K.C."/>
            <person name="Sas-Chen A."/>
            <person name="Miller-Fleming L."/>
            <person name="Garone C."/>
            <person name="Van Haute L."/>
            <person name="Rogan J.F."/>
            <person name="Dinan A."/>
            <person name="Firth A.E."/>
            <person name="Andrews B."/>
            <person name="Whitworth A.J."/>
            <person name="Schwartz S."/>
            <person name="Warren A.J."/>
            <person name="Minczuk M."/>
        </authorList>
    </citation>
    <scope>STRUCTURE BY ELECTRON MICROSCOPY (2.9 ANGSTROMS) IN COMPLEX WITH MTLSU</scope>
    <scope>SUBUNIT</scope>
</reference>
<protein>
    <recommendedName>
        <fullName evidence="6">Large ribosomal subunit protein uL24m</fullName>
    </recommendedName>
    <alternativeName>
        <fullName>39S ribosomal protein L24, mitochondrial</fullName>
        <shortName>L24mt</shortName>
        <shortName>MRP-L24</shortName>
    </alternativeName>
</protein>
<comment type="subunit">
    <text evidence="2 3 4 5">Component of the mitochondrial large ribosomal subunit (mt-LSU) (PubMed:25278503, PubMed:25838379, PubMed:28892042, PubMed:35177605). Mature mammalian 55S mitochondrial ribosomes consist of a small (28S) and a large (39S) subunit. The 28S small subunit contains a 12S ribosomal RNA (12S mt-rRNA) and 30 different proteins. The 39S large subunit contains a 16S rRNA (16S mt-rRNA), a copy of mitochondrial valine transfer RNA (mt-tRNA(Val)), which plays an integral structural role, and 52 different proteins.</text>
</comment>
<comment type="subcellular location">
    <subcellularLocation>
        <location evidence="2 3 4">Mitochondrion</location>
    </subcellularLocation>
</comment>
<comment type="similarity">
    <text evidence="7">Belongs to the universal ribosomal protein uL24 family.</text>
</comment>